<reference key="1">
    <citation type="submission" date="1998-03" db="EMBL/GenBank/DDBJ databases">
        <title>Expression of chloroplast Cu/Zn-superoxide dismutase during senescence and regreening of Zantedeschia aethiopica spathe.</title>
        <authorList>
            <person name="Lino-Neto T."/>
            <person name="Tavares R.M."/>
            <person name="Palme K."/>
            <person name="Pais M.S.S."/>
        </authorList>
    </citation>
    <scope>NUCLEOTIDE SEQUENCE [MRNA]</scope>
    <source>
        <tissue>Leaf</tissue>
    </source>
</reference>
<keyword id="KW-0049">Antioxidant</keyword>
<keyword id="KW-0150">Chloroplast</keyword>
<keyword id="KW-0186">Copper</keyword>
<keyword id="KW-1015">Disulfide bond</keyword>
<keyword id="KW-0479">Metal-binding</keyword>
<keyword id="KW-0560">Oxidoreductase</keyword>
<keyword id="KW-0934">Plastid</keyword>
<keyword id="KW-0809">Transit peptide</keyword>
<keyword id="KW-0862">Zinc</keyword>
<accession>O65175</accession>
<gene>
    <name type="primary">SODCP</name>
    <name type="synonym">SOD4</name>
</gene>
<feature type="transit peptide" description="Chloroplast" evidence="2">
    <location>
        <begin position="1"/>
        <end position="62"/>
    </location>
</feature>
<feature type="chain" id="PRO_0000032854" description="Superoxide dismutase [Cu-Zn], chloroplastic">
    <location>
        <begin position="63"/>
        <end position="216"/>
    </location>
</feature>
<feature type="binding site" evidence="1">
    <location>
        <position position="108"/>
    </location>
    <ligand>
        <name>Cu cation</name>
        <dbReference type="ChEBI" id="CHEBI:23378"/>
        <note>catalytic</note>
    </ligand>
</feature>
<feature type="binding site" evidence="1">
    <location>
        <position position="110"/>
    </location>
    <ligand>
        <name>Cu cation</name>
        <dbReference type="ChEBI" id="CHEBI:23378"/>
        <note>catalytic</note>
    </ligand>
</feature>
<feature type="binding site" evidence="1">
    <location>
        <position position="125"/>
    </location>
    <ligand>
        <name>Cu cation</name>
        <dbReference type="ChEBI" id="CHEBI:23378"/>
        <note>catalytic</note>
    </ligand>
</feature>
<feature type="binding site" evidence="1">
    <location>
        <position position="125"/>
    </location>
    <ligand>
        <name>Zn(2+)</name>
        <dbReference type="ChEBI" id="CHEBI:29105"/>
        <note>structural</note>
    </ligand>
</feature>
<feature type="binding site" evidence="1">
    <location>
        <position position="133"/>
    </location>
    <ligand>
        <name>Zn(2+)</name>
        <dbReference type="ChEBI" id="CHEBI:29105"/>
        <note>structural</note>
    </ligand>
</feature>
<feature type="binding site" evidence="1">
    <location>
        <position position="142"/>
    </location>
    <ligand>
        <name>Zn(2+)</name>
        <dbReference type="ChEBI" id="CHEBI:29105"/>
        <note>structural</note>
    </ligand>
</feature>
<feature type="binding site" evidence="1">
    <location>
        <position position="145"/>
    </location>
    <ligand>
        <name>Zn(2+)</name>
        <dbReference type="ChEBI" id="CHEBI:29105"/>
        <note>structural</note>
    </ligand>
</feature>
<feature type="binding site" evidence="1">
    <location>
        <position position="182"/>
    </location>
    <ligand>
        <name>Cu cation</name>
        <dbReference type="ChEBI" id="CHEBI:23378"/>
        <note>catalytic</note>
    </ligand>
</feature>
<feature type="disulfide bond" evidence="1">
    <location>
        <begin position="119"/>
        <end position="208"/>
    </location>
</feature>
<comment type="function">
    <text>Destroys radicals which are normally produced within the cells and which are toxic to biological systems.</text>
</comment>
<comment type="catalytic activity">
    <reaction>
        <text>2 superoxide + 2 H(+) = H2O2 + O2</text>
        <dbReference type="Rhea" id="RHEA:20696"/>
        <dbReference type="ChEBI" id="CHEBI:15378"/>
        <dbReference type="ChEBI" id="CHEBI:15379"/>
        <dbReference type="ChEBI" id="CHEBI:16240"/>
        <dbReference type="ChEBI" id="CHEBI:18421"/>
        <dbReference type="EC" id="1.15.1.1"/>
    </reaction>
</comment>
<comment type="cofactor">
    <cofactor evidence="1">
        <name>Cu cation</name>
        <dbReference type="ChEBI" id="CHEBI:23378"/>
    </cofactor>
    <text evidence="1">Binds 1 copper ion per subunit.</text>
</comment>
<comment type="cofactor">
    <cofactor evidence="1">
        <name>Zn(2+)</name>
        <dbReference type="ChEBI" id="CHEBI:29105"/>
    </cofactor>
    <text evidence="1">Binds 1 zinc ion per subunit.</text>
</comment>
<comment type="subunit">
    <text evidence="1">Homotetramer.</text>
</comment>
<comment type="subcellular location">
    <subcellularLocation>
        <location>Plastid</location>
        <location>Chloroplast</location>
    </subcellularLocation>
</comment>
<comment type="similarity">
    <text evidence="3">Belongs to the Cu-Zn superoxide dismutase family.</text>
</comment>
<sequence>MACHSALAAVPSSRLHFYAPRPPLSTSVCPFQTALLGQPLRIYSSGASIAAAASPRSMVVVAATKKAVAVLKGTSQVDGVVTLVQEDDGPTTVNVRITGLTPGLHGFHLHEYGDTTNGCISTGSHFNPNKLTHGAPMDVVRHAGDLGNIVANVDGLAEATIVDDQIPLSGSNSVVGRAFVVHELEDDLGKGGHELSLTTGNAGGRLACGVVGLTPV</sequence>
<name>SODCP_ZANAE</name>
<evidence type="ECO:0000250" key="1"/>
<evidence type="ECO:0000255" key="2"/>
<evidence type="ECO:0000305" key="3"/>
<protein>
    <recommendedName>
        <fullName>Superoxide dismutase [Cu-Zn], chloroplastic</fullName>
        <ecNumber>1.15.1.1</ecNumber>
    </recommendedName>
</protein>
<organism>
    <name type="scientific">Zantedeschia aethiopica</name>
    <name type="common">White calla lily</name>
    <name type="synonym">Calla aethiopica</name>
    <dbReference type="NCBI Taxonomy" id="69721"/>
    <lineage>
        <taxon>Eukaryota</taxon>
        <taxon>Viridiplantae</taxon>
        <taxon>Streptophyta</taxon>
        <taxon>Embryophyta</taxon>
        <taxon>Tracheophyta</taxon>
        <taxon>Spermatophyta</taxon>
        <taxon>Magnoliopsida</taxon>
        <taxon>Liliopsida</taxon>
        <taxon>Araceae</taxon>
        <taxon>Philodendroideae</taxon>
        <taxon>Zantedeschieae</taxon>
        <taxon>Zantedeschia</taxon>
    </lineage>
</organism>
<proteinExistence type="evidence at transcript level"/>
<dbReference type="EC" id="1.15.1.1"/>
<dbReference type="EMBL" id="AF054151">
    <property type="protein sequence ID" value="AAC08582.1"/>
    <property type="molecule type" value="mRNA"/>
</dbReference>
<dbReference type="SMR" id="O65175"/>
<dbReference type="GO" id="GO:0009507">
    <property type="term" value="C:chloroplast"/>
    <property type="evidence" value="ECO:0007669"/>
    <property type="project" value="UniProtKB-SubCell"/>
</dbReference>
<dbReference type="GO" id="GO:0005507">
    <property type="term" value="F:copper ion binding"/>
    <property type="evidence" value="ECO:0007669"/>
    <property type="project" value="InterPro"/>
</dbReference>
<dbReference type="GO" id="GO:0004784">
    <property type="term" value="F:superoxide dismutase activity"/>
    <property type="evidence" value="ECO:0007669"/>
    <property type="project" value="UniProtKB-EC"/>
</dbReference>
<dbReference type="CDD" id="cd00305">
    <property type="entry name" value="Cu-Zn_Superoxide_Dismutase"/>
    <property type="match status" value="1"/>
</dbReference>
<dbReference type="FunFam" id="2.60.40.200:FF:000003">
    <property type="entry name" value="Superoxide dismutase [Cu-Zn], chloroplastic"/>
    <property type="match status" value="1"/>
</dbReference>
<dbReference type="Gene3D" id="2.60.40.200">
    <property type="entry name" value="Superoxide dismutase, copper/zinc binding domain"/>
    <property type="match status" value="1"/>
</dbReference>
<dbReference type="InterPro" id="IPR036423">
    <property type="entry name" value="SOD-like_Cu/Zn_dom_sf"/>
</dbReference>
<dbReference type="InterPro" id="IPR024134">
    <property type="entry name" value="SOD_Cu/Zn_/chaperone"/>
</dbReference>
<dbReference type="InterPro" id="IPR018152">
    <property type="entry name" value="SOD_Cu/Zn_BS"/>
</dbReference>
<dbReference type="InterPro" id="IPR001424">
    <property type="entry name" value="SOD_Cu_Zn_dom"/>
</dbReference>
<dbReference type="PANTHER" id="PTHR10003">
    <property type="entry name" value="SUPEROXIDE DISMUTASE CU-ZN -RELATED"/>
    <property type="match status" value="1"/>
</dbReference>
<dbReference type="Pfam" id="PF00080">
    <property type="entry name" value="Sod_Cu"/>
    <property type="match status" value="1"/>
</dbReference>
<dbReference type="PRINTS" id="PR00068">
    <property type="entry name" value="CUZNDISMTASE"/>
</dbReference>
<dbReference type="SUPFAM" id="SSF49329">
    <property type="entry name" value="Cu,Zn superoxide dismutase-like"/>
    <property type="match status" value="1"/>
</dbReference>
<dbReference type="PROSITE" id="PS00087">
    <property type="entry name" value="SOD_CU_ZN_1"/>
    <property type="match status" value="1"/>
</dbReference>
<dbReference type="PROSITE" id="PS00332">
    <property type="entry name" value="SOD_CU_ZN_2"/>
    <property type="match status" value="1"/>
</dbReference>